<gene>
    <name evidence="1" type="primary">nuoI</name>
    <name type="ordered locus">FTN_1672</name>
</gene>
<sequence>MRNITNFLKTFLLWELLKGLKVTGKHFFTRKVTVQYPDEKTPISNRFRGLHALRRYENGEERCIACKLCEVVCPALAITINSTEREDGTRRTSSYEIDLFKCIFCGYCEESCPVDSIVETNILEYHFEERGENIMTKAKLLAIGDKYEAQIAADRLQDKDFR</sequence>
<proteinExistence type="inferred from homology"/>
<keyword id="KW-0004">4Fe-4S</keyword>
<keyword id="KW-0997">Cell inner membrane</keyword>
<keyword id="KW-1003">Cell membrane</keyword>
<keyword id="KW-0408">Iron</keyword>
<keyword id="KW-0411">Iron-sulfur</keyword>
<keyword id="KW-0472">Membrane</keyword>
<keyword id="KW-0479">Metal-binding</keyword>
<keyword id="KW-0520">NAD</keyword>
<keyword id="KW-0874">Quinone</keyword>
<keyword id="KW-0677">Repeat</keyword>
<keyword id="KW-1278">Translocase</keyword>
<keyword id="KW-0830">Ubiquinone</keyword>
<organism>
    <name type="scientific">Francisella tularensis subsp. novicida (strain U112)</name>
    <dbReference type="NCBI Taxonomy" id="401614"/>
    <lineage>
        <taxon>Bacteria</taxon>
        <taxon>Pseudomonadati</taxon>
        <taxon>Pseudomonadota</taxon>
        <taxon>Gammaproteobacteria</taxon>
        <taxon>Thiotrichales</taxon>
        <taxon>Francisellaceae</taxon>
        <taxon>Francisella</taxon>
    </lineage>
</organism>
<feature type="chain" id="PRO_0000298496" description="NADH-quinone oxidoreductase subunit I">
    <location>
        <begin position="1"/>
        <end position="162"/>
    </location>
</feature>
<feature type="domain" description="4Fe-4S ferredoxin-type 1" evidence="1">
    <location>
        <begin position="54"/>
        <end position="83"/>
    </location>
</feature>
<feature type="domain" description="4Fe-4S ferredoxin-type 2" evidence="1">
    <location>
        <begin position="93"/>
        <end position="122"/>
    </location>
</feature>
<feature type="binding site" evidence="1">
    <location>
        <position position="63"/>
    </location>
    <ligand>
        <name>[4Fe-4S] cluster</name>
        <dbReference type="ChEBI" id="CHEBI:49883"/>
        <label>1</label>
    </ligand>
</feature>
<feature type="binding site" evidence="1">
    <location>
        <position position="66"/>
    </location>
    <ligand>
        <name>[4Fe-4S] cluster</name>
        <dbReference type="ChEBI" id="CHEBI:49883"/>
        <label>1</label>
    </ligand>
</feature>
<feature type="binding site" evidence="1">
    <location>
        <position position="69"/>
    </location>
    <ligand>
        <name>[4Fe-4S] cluster</name>
        <dbReference type="ChEBI" id="CHEBI:49883"/>
        <label>1</label>
    </ligand>
</feature>
<feature type="binding site" evidence="1">
    <location>
        <position position="73"/>
    </location>
    <ligand>
        <name>[4Fe-4S] cluster</name>
        <dbReference type="ChEBI" id="CHEBI:49883"/>
        <label>2</label>
    </ligand>
</feature>
<feature type="binding site" evidence="1">
    <location>
        <position position="102"/>
    </location>
    <ligand>
        <name>[4Fe-4S] cluster</name>
        <dbReference type="ChEBI" id="CHEBI:49883"/>
        <label>2</label>
    </ligand>
</feature>
<feature type="binding site" evidence="1">
    <location>
        <position position="105"/>
    </location>
    <ligand>
        <name>[4Fe-4S] cluster</name>
        <dbReference type="ChEBI" id="CHEBI:49883"/>
        <label>2</label>
    </ligand>
</feature>
<feature type="binding site" evidence="1">
    <location>
        <position position="108"/>
    </location>
    <ligand>
        <name>[4Fe-4S] cluster</name>
        <dbReference type="ChEBI" id="CHEBI:49883"/>
        <label>2</label>
    </ligand>
</feature>
<feature type="binding site" evidence="1">
    <location>
        <position position="112"/>
    </location>
    <ligand>
        <name>[4Fe-4S] cluster</name>
        <dbReference type="ChEBI" id="CHEBI:49883"/>
        <label>1</label>
    </ligand>
</feature>
<dbReference type="EC" id="7.1.1.-" evidence="1"/>
<dbReference type="EMBL" id="CP000439">
    <property type="protein sequence ID" value="ABK90529.1"/>
    <property type="molecule type" value="Genomic_DNA"/>
</dbReference>
<dbReference type="RefSeq" id="WP_003035182.1">
    <property type="nucleotide sequence ID" value="NZ_CP009633.1"/>
</dbReference>
<dbReference type="SMR" id="A0Q8G4"/>
<dbReference type="GeneID" id="75264597"/>
<dbReference type="KEGG" id="ftn:FTN_1672"/>
<dbReference type="KEGG" id="ftx:AW25_316"/>
<dbReference type="BioCyc" id="FTUL401614:G1G75-1733-MONOMER"/>
<dbReference type="Proteomes" id="UP000000762">
    <property type="component" value="Chromosome"/>
</dbReference>
<dbReference type="GO" id="GO:0005886">
    <property type="term" value="C:plasma membrane"/>
    <property type="evidence" value="ECO:0007669"/>
    <property type="project" value="UniProtKB-SubCell"/>
</dbReference>
<dbReference type="GO" id="GO:0051539">
    <property type="term" value="F:4 iron, 4 sulfur cluster binding"/>
    <property type="evidence" value="ECO:0007669"/>
    <property type="project" value="UniProtKB-KW"/>
</dbReference>
<dbReference type="GO" id="GO:0005506">
    <property type="term" value="F:iron ion binding"/>
    <property type="evidence" value="ECO:0007669"/>
    <property type="project" value="UniProtKB-UniRule"/>
</dbReference>
<dbReference type="GO" id="GO:0050136">
    <property type="term" value="F:NADH:ubiquinone reductase (non-electrogenic) activity"/>
    <property type="evidence" value="ECO:0007669"/>
    <property type="project" value="UniProtKB-UniRule"/>
</dbReference>
<dbReference type="GO" id="GO:0048038">
    <property type="term" value="F:quinone binding"/>
    <property type="evidence" value="ECO:0007669"/>
    <property type="project" value="UniProtKB-KW"/>
</dbReference>
<dbReference type="GO" id="GO:0009060">
    <property type="term" value="P:aerobic respiration"/>
    <property type="evidence" value="ECO:0007669"/>
    <property type="project" value="TreeGrafter"/>
</dbReference>
<dbReference type="FunFam" id="3.30.70.3270:FF:000003">
    <property type="entry name" value="NADH-quinone oxidoreductase subunit I"/>
    <property type="match status" value="1"/>
</dbReference>
<dbReference type="Gene3D" id="3.30.70.3270">
    <property type="match status" value="1"/>
</dbReference>
<dbReference type="HAMAP" id="MF_01351">
    <property type="entry name" value="NDH1_NuoI"/>
    <property type="match status" value="1"/>
</dbReference>
<dbReference type="InterPro" id="IPR017896">
    <property type="entry name" value="4Fe4S_Fe-S-bd"/>
</dbReference>
<dbReference type="InterPro" id="IPR017900">
    <property type="entry name" value="4Fe4S_Fe_S_CS"/>
</dbReference>
<dbReference type="InterPro" id="IPR010226">
    <property type="entry name" value="NADH_quinone_OxRdtase_chainI"/>
</dbReference>
<dbReference type="NCBIfam" id="TIGR01971">
    <property type="entry name" value="NuoI"/>
    <property type="match status" value="1"/>
</dbReference>
<dbReference type="NCBIfam" id="NF004538">
    <property type="entry name" value="PRK05888.1-4"/>
    <property type="match status" value="1"/>
</dbReference>
<dbReference type="PANTHER" id="PTHR10849:SF20">
    <property type="entry name" value="NADH DEHYDROGENASE [UBIQUINONE] IRON-SULFUR PROTEIN 8, MITOCHONDRIAL"/>
    <property type="match status" value="1"/>
</dbReference>
<dbReference type="PANTHER" id="PTHR10849">
    <property type="entry name" value="NADH DEHYDROGENASE UBIQUINONE IRON-SULFUR PROTEIN 8, MITOCHONDRIAL"/>
    <property type="match status" value="1"/>
</dbReference>
<dbReference type="Pfam" id="PF12838">
    <property type="entry name" value="Fer4_7"/>
    <property type="match status" value="1"/>
</dbReference>
<dbReference type="SUPFAM" id="SSF54862">
    <property type="entry name" value="4Fe-4S ferredoxins"/>
    <property type="match status" value="1"/>
</dbReference>
<dbReference type="PROSITE" id="PS00198">
    <property type="entry name" value="4FE4S_FER_1"/>
    <property type="match status" value="2"/>
</dbReference>
<dbReference type="PROSITE" id="PS51379">
    <property type="entry name" value="4FE4S_FER_2"/>
    <property type="match status" value="2"/>
</dbReference>
<protein>
    <recommendedName>
        <fullName evidence="1">NADH-quinone oxidoreductase subunit I</fullName>
        <ecNumber evidence="1">7.1.1.-</ecNumber>
    </recommendedName>
    <alternativeName>
        <fullName evidence="1">NADH dehydrogenase I subunit I</fullName>
    </alternativeName>
    <alternativeName>
        <fullName evidence="1">NDH-1 subunit I</fullName>
    </alternativeName>
</protein>
<name>NUOI_FRATN</name>
<evidence type="ECO:0000255" key="1">
    <source>
        <dbReference type="HAMAP-Rule" id="MF_01351"/>
    </source>
</evidence>
<accession>A0Q8G4</accession>
<reference key="1">
    <citation type="journal article" date="2007" name="Genome Biol.">
        <title>Comparison of Francisella tularensis genomes reveals evolutionary events associated with the emergence of human pathogenic strains.</title>
        <authorList>
            <person name="Rohmer L."/>
            <person name="Fong C."/>
            <person name="Abmayr S."/>
            <person name="Wasnick M."/>
            <person name="Larson Freeman T.J."/>
            <person name="Radey M."/>
            <person name="Guina T."/>
            <person name="Svensson K."/>
            <person name="Hayden H.S."/>
            <person name="Jacobs M."/>
            <person name="Gallagher L.A."/>
            <person name="Manoil C."/>
            <person name="Ernst R.K."/>
            <person name="Drees B."/>
            <person name="Buckley D."/>
            <person name="Haugen E."/>
            <person name="Bovee D."/>
            <person name="Zhou Y."/>
            <person name="Chang J."/>
            <person name="Levy R."/>
            <person name="Lim R."/>
            <person name="Gillett W."/>
            <person name="Guenthener D."/>
            <person name="Kang A."/>
            <person name="Shaffer S.A."/>
            <person name="Taylor G."/>
            <person name="Chen J."/>
            <person name="Gallis B."/>
            <person name="D'Argenio D.A."/>
            <person name="Forsman M."/>
            <person name="Olson M.V."/>
            <person name="Goodlett D.R."/>
            <person name="Kaul R."/>
            <person name="Miller S.I."/>
            <person name="Brittnacher M.J."/>
        </authorList>
    </citation>
    <scope>NUCLEOTIDE SEQUENCE [LARGE SCALE GENOMIC DNA]</scope>
    <source>
        <strain>U112</strain>
    </source>
</reference>
<comment type="function">
    <text evidence="1">NDH-1 shuttles electrons from NADH, via FMN and iron-sulfur (Fe-S) centers, to quinones in the respiratory chain. The immediate electron acceptor for the enzyme in this species is believed to be ubiquinone. Couples the redox reaction to proton translocation (for every two electrons transferred, four hydrogen ions are translocated across the cytoplasmic membrane), and thus conserves the redox energy in a proton gradient.</text>
</comment>
<comment type="catalytic activity">
    <reaction evidence="1">
        <text>a quinone + NADH + 5 H(+)(in) = a quinol + NAD(+) + 4 H(+)(out)</text>
        <dbReference type="Rhea" id="RHEA:57888"/>
        <dbReference type="ChEBI" id="CHEBI:15378"/>
        <dbReference type="ChEBI" id="CHEBI:24646"/>
        <dbReference type="ChEBI" id="CHEBI:57540"/>
        <dbReference type="ChEBI" id="CHEBI:57945"/>
        <dbReference type="ChEBI" id="CHEBI:132124"/>
    </reaction>
</comment>
<comment type="cofactor">
    <cofactor evidence="1">
        <name>[4Fe-4S] cluster</name>
        <dbReference type="ChEBI" id="CHEBI:49883"/>
    </cofactor>
    <text evidence="1">Binds 2 [4Fe-4S] clusters per subunit.</text>
</comment>
<comment type="subunit">
    <text evidence="1">NDH-1 is composed of 14 different subunits. Subunits NuoA, H, J, K, L, M, N constitute the membrane sector of the complex.</text>
</comment>
<comment type="subcellular location">
    <subcellularLocation>
        <location evidence="1">Cell inner membrane</location>
        <topology evidence="1">Peripheral membrane protein</topology>
    </subcellularLocation>
</comment>
<comment type="similarity">
    <text evidence="1">Belongs to the complex I 23 kDa subunit family.</text>
</comment>